<dbReference type="EC" id="6.3.3.1" evidence="1"/>
<dbReference type="EMBL" id="AE016830">
    <property type="protein sequence ID" value="AAO81551.1"/>
    <property type="molecule type" value="Genomic_DNA"/>
</dbReference>
<dbReference type="RefSeq" id="NP_815481.1">
    <property type="nucleotide sequence ID" value="NC_004668.1"/>
</dbReference>
<dbReference type="RefSeq" id="WP_002369275.1">
    <property type="nucleotide sequence ID" value="NZ_KE136528.1"/>
</dbReference>
<dbReference type="SMR" id="Q833Z1"/>
<dbReference type="STRING" id="226185.EF_1780"/>
<dbReference type="EnsemblBacteria" id="AAO81551">
    <property type="protein sequence ID" value="AAO81551"/>
    <property type="gene ID" value="EF_1780"/>
</dbReference>
<dbReference type="KEGG" id="efa:EF1780"/>
<dbReference type="PATRIC" id="fig|226185.45.peg.1735"/>
<dbReference type="eggNOG" id="COG0150">
    <property type="taxonomic scope" value="Bacteria"/>
</dbReference>
<dbReference type="HOGENOM" id="CLU_047116_0_0_9"/>
<dbReference type="UniPathway" id="UPA00074">
    <property type="reaction ID" value="UER00129"/>
</dbReference>
<dbReference type="Proteomes" id="UP000001415">
    <property type="component" value="Chromosome"/>
</dbReference>
<dbReference type="GO" id="GO:0005829">
    <property type="term" value="C:cytosol"/>
    <property type="evidence" value="ECO:0007669"/>
    <property type="project" value="TreeGrafter"/>
</dbReference>
<dbReference type="GO" id="GO:0005524">
    <property type="term" value="F:ATP binding"/>
    <property type="evidence" value="ECO:0007669"/>
    <property type="project" value="UniProtKB-KW"/>
</dbReference>
<dbReference type="GO" id="GO:0004637">
    <property type="term" value="F:phosphoribosylamine-glycine ligase activity"/>
    <property type="evidence" value="ECO:0007669"/>
    <property type="project" value="TreeGrafter"/>
</dbReference>
<dbReference type="GO" id="GO:0004641">
    <property type="term" value="F:phosphoribosylformylglycinamidine cyclo-ligase activity"/>
    <property type="evidence" value="ECO:0007669"/>
    <property type="project" value="UniProtKB-UniRule"/>
</dbReference>
<dbReference type="GO" id="GO:0006189">
    <property type="term" value="P:'de novo' IMP biosynthetic process"/>
    <property type="evidence" value="ECO:0007669"/>
    <property type="project" value="UniProtKB-UniRule"/>
</dbReference>
<dbReference type="GO" id="GO:0046084">
    <property type="term" value="P:adenine biosynthetic process"/>
    <property type="evidence" value="ECO:0007669"/>
    <property type="project" value="TreeGrafter"/>
</dbReference>
<dbReference type="CDD" id="cd02196">
    <property type="entry name" value="PurM"/>
    <property type="match status" value="1"/>
</dbReference>
<dbReference type="FunFam" id="3.30.1330.10:FF:000001">
    <property type="entry name" value="Phosphoribosylformylglycinamidine cyclo-ligase"/>
    <property type="match status" value="1"/>
</dbReference>
<dbReference type="FunFam" id="3.90.650.10:FF:000011">
    <property type="entry name" value="Phosphoribosylformylglycinamidine cyclo-ligase"/>
    <property type="match status" value="1"/>
</dbReference>
<dbReference type="Gene3D" id="3.90.650.10">
    <property type="entry name" value="PurM-like C-terminal domain"/>
    <property type="match status" value="1"/>
</dbReference>
<dbReference type="Gene3D" id="3.30.1330.10">
    <property type="entry name" value="PurM-like, N-terminal domain"/>
    <property type="match status" value="1"/>
</dbReference>
<dbReference type="HAMAP" id="MF_00741">
    <property type="entry name" value="AIRS"/>
    <property type="match status" value="1"/>
</dbReference>
<dbReference type="InterPro" id="IPR010918">
    <property type="entry name" value="PurM-like_C_dom"/>
</dbReference>
<dbReference type="InterPro" id="IPR036676">
    <property type="entry name" value="PurM-like_C_sf"/>
</dbReference>
<dbReference type="InterPro" id="IPR016188">
    <property type="entry name" value="PurM-like_N"/>
</dbReference>
<dbReference type="InterPro" id="IPR036921">
    <property type="entry name" value="PurM-like_N_sf"/>
</dbReference>
<dbReference type="InterPro" id="IPR004733">
    <property type="entry name" value="PurM_cligase"/>
</dbReference>
<dbReference type="NCBIfam" id="TIGR00878">
    <property type="entry name" value="purM"/>
    <property type="match status" value="1"/>
</dbReference>
<dbReference type="PANTHER" id="PTHR10520:SF12">
    <property type="entry name" value="TRIFUNCTIONAL PURINE BIOSYNTHETIC PROTEIN ADENOSINE-3"/>
    <property type="match status" value="1"/>
</dbReference>
<dbReference type="PANTHER" id="PTHR10520">
    <property type="entry name" value="TRIFUNCTIONAL PURINE BIOSYNTHETIC PROTEIN ADENOSINE-3-RELATED"/>
    <property type="match status" value="1"/>
</dbReference>
<dbReference type="Pfam" id="PF00586">
    <property type="entry name" value="AIRS"/>
    <property type="match status" value="1"/>
</dbReference>
<dbReference type="Pfam" id="PF02769">
    <property type="entry name" value="AIRS_C"/>
    <property type="match status" value="1"/>
</dbReference>
<dbReference type="SUPFAM" id="SSF56042">
    <property type="entry name" value="PurM C-terminal domain-like"/>
    <property type="match status" value="1"/>
</dbReference>
<dbReference type="SUPFAM" id="SSF55326">
    <property type="entry name" value="PurM N-terminal domain-like"/>
    <property type="match status" value="1"/>
</dbReference>
<keyword id="KW-0067">ATP-binding</keyword>
<keyword id="KW-0963">Cytoplasm</keyword>
<keyword id="KW-0436">Ligase</keyword>
<keyword id="KW-0547">Nucleotide-binding</keyword>
<keyword id="KW-0658">Purine biosynthesis</keyword>
<keyword id="KW-1185">Reference proteome</keyword>
<feature type="chain" id="PRO_0000148212" description="Phosphoribosylformylglycinamidine cyclo-ligase">
    <location>
        <begin position="1"/>
        <end position="343"/>
    </location>
</feature>
<evidence type="ECO:0000255" key="1">
    <source>
        <dbReference type="HAMAP-Rule" id="MF_00741"/>
    </source>
</evidence>
<sequence length="343" mass="36931">MENAYSKAGVNVEAGYEVVERIQKHSQKTQRTGTLGMLGGFGGCFDLSSYKLKEPVLVSGTDGVGTKLLLAIEEQKHETIGIDCVAMCVNDVVAQGAEPLYFLDYLALGTVNPAKVEAIVAGVAAGCCEANAALIGGETAEMPDMYEADAYDVAGFAVGIAEKSQLLTPSNVKEGDFLIGLPSSGLHSNGYSLVRNIFFKKHSFKTTDKLPELAPKTLGEELLTPTKIYVKELLPLLKAGLVHGAAHITGGGFLENLPRMFSSALAAEIQLNSWPVLPIFKLIQKYGEIPPEEMYEIFNMGLGMILAVSPEHVEKVQELLPEAFEIGRLVPRKTKAVIFKEAL</sequence>
<gene>
    <name evidence="1" type="primary">purM</name>
    <name type="ordered locus">EF_1780</name>
</gene>
<protein>
    <recommendedName>
        <fullName evidence="1">Phosphoribosylformylglycinamidine cyclo-ligase</fullName>
        <ecNumber evidence="1">6.3.3.1</ecNumber>
    </recommendedName>
    <alternativeName>
        <fullName evidence="1">AIR synthase</fullName>
    </alternativeName>
    <alternativeName>
        <fullName evidence="1">AIRS</fullName>
    </alternativeName>
    <alternativeName>
        <fullName evidence="1">Phosphoribosyl-aminoimidazole synthetase</fullName>
    </alternativeName>
</protein>
<comment type="catalytic activity">
    <reaction evidence="1">
        <text>2-formamido-N(1)-(5-O-phospho-beta-D-ribosyl)acetamidine + ATP = 5-amino-1-(5-phospho-beta-D-ribosyl)imidazole + ADP + phosphate + H(+)</text>
        <dbReference type="Rhea" id="RHEA:23032"/>
        <dbReference type="ChEBI" id="CHEBI:15378"/>
        <dbReference type="ChEBI" id="CHEBI:30616"/>
        <dbReference type="ChEBI" id="CHEBI:43474"/>
        <dbReference type="ChEBI" id="CHEBI:137981"/>
        <dbReference type="ChEBI" id="CHEBI:147287"/>
        <dbReference type="ChEBI" id="CHEBI:456216"/>
        <dbReference type="EC" id="6.3.3.1"/>
    </reaction>
</comment>
<comment type="pathway">
    <text evidence="1">Purine metabolism; IMP biosynthesis via de novo pathway; 5-amino-1-(5-phospho-D-ribosyl)imidazole from N(2)-formyl-N(1)-(5-phospho-D-ribosyl)glycinamide: step 2/2.</text>
</comment>
<comment type="subcellular location">
    <subcellularLocation>
        <location evidence="1">Cytoplasm</location>
    </subcellularLocation>
</comment>
<comment type="similarity">
    <text evidence="1">Belongs to the AIR synthase family.</text>
</comment>
<proteinExistence type="inferred from homology"/>
<accession>Q833Z1</accession>
<name>PUR5_ENTFA</name>
<organism>
    <name type="scientific">Enterococcus faecalis (strain ATCC 700802 / V583)</name>
    <dbReference type="NCBI Taxonomy" id="226185"/>
    <lineage>
        <taxon>Bacteria</taxon>
        <taxon>Bacillati</taxon>
        <taxon>Bacillota</taxon>
        <taxon>Bacilli</taxon>
        <taxon>Lactobacillales</taxon>
        <taxon>Enterococcaceae</taxon>
        <taxon>Enterococcus</taxon>
    </lineage>
</organism>
<reference key="1">
    <citation type="journal article" date="2003" name="Science">
        <title>Role of mobile DNA in the evolution of vancomycin-resistant Enterococcus faecalis.</title>
        <authorList>
            <person name="Paulsen I.T."/>
            <person name="Banerjei L."/>
            <person name="Myers G.S.A."/>
            <person name="Nelson K.E."/>
            <person name="Seshadri R."/>
            <person name="Read T.D."/>
            <person name="Fouts D.E."/>
            <person name="Eisen J.A."/>
            <person name="Gill S.R."/>
            <person name="Heidelberg J.F."/>
            <person name="Tettelin H."/>
            <person name="Dodson R.J."/>
            <person name="Umayam L.A."/>
            <person name="Brinkac L.M."/>
            <person name="Beanan M.J."/>
            <person name="Daugherty S.C."/>
            <person name="DeBoy R.T."/>
            <person name="Durkin S.A."/>
            <person name="Kolonay J.F."/>
            <person name="Madupu R."/>
            <person name="Nelson W.C."/>
            <person name="Vamathevan J.J."/>
            <person name="Tran B."/>
            <person name="Upton J."/>
            <person name="Hansen T."/>
            <person name="Shetty J."/>
            <person name="Khouri H.M."/>
            <person name="Utterback T.R."/>
            <person name="Radune D."/>
            <person name="Ketchum K.A."/>
            <person name="Dougherty B.A."/>
            <person name="Fraser C.M."/>
        </authorList>
    </citation>
    <scope>NUCLEOTIDE SEQUENCE [LARGE SCALE GENOMIC DNA]</scope>
    <source>
        <strain>ATCC 700802 / V583</strain>
    </source>
</reference>